<accession>B0TW04</accession>
<gene>
    <name evidence="1" type="primary">hemC</name>
    <name type="ordered locus">Fphi_0691</name>
</gene>
<sequence>MKQIVIASRESKLALWQTNYVKDRIQQELNIRCQINTMKTQGDIILDKPLNKIGGKALFMKELEIAMLNNKADIAVHSLKDVPYQLPQGFCLSSFMPREDPRDAFVSNKYSSIDDLPRGAIVGTSSLRRKAQLLHYRYDLEIRDLRGNVQTRLSKLDNGDYDAIILASAGLIRLELNERITQFIPVEISLPAVGQGIVVIEALDKSSEILQKLQKLNCSDSFCVATAERAFNQELKGGCHVAIGAYAELHDNQITLTAMVASSDGKNILKRKLTGDDPMRLGKLLAQEMIELGAYKILEK</sequence>
<reference key="1">
    <citation type="submission" date="2007-12" db="EMBL/GenBank/DDBJ databases">
        <title>Complete sequence of chromosome of Francisella philomiragia subsp. philomiragia ATCC 25017.</title>
        <authorList>
            <consortium name="US DOE Joint Genome Institute"/>
            <person name="Copeland A."/>
            <person name="Lucas S."/>
            <person name="Lapidus A."/>
            <person name="Barry K."/>
            <person name="Detter J.C."/>
            <person name="Glavina del Rio T."/>
            <person name="Hammon N."/>
            <person name="Israni S."/>
            <person name="Dalin E."/>
            <person name="Tice H."/>
            <person name="Pitluck S."/>
            <person name="Chain P."/>
            <person name="Malfatti S."/>
            <person name="Shin M."/>
            <person name="Vergez L."/>
            <person name="Schmutz J."/>
            <person name="Larimer F."/>
            <person name="Land M."/>
            <person name="Hauser L."/>
            <person name="Richardson P."/>
        </authorList>
    </citation>
    <scope>NUCLEOTIDE SEQUENCE [LARGE SCALE GENOMIC DNA]</scope>
    <source>
        <strain>ATCC 25017 / CCUG 19701 / FSC 153 / O#319-036</strain>
    </source>
</reference>
<keyword id="KW-0627">Porphyrin biosynthesis</keyword>
<keyword id="KW-0808">Transferase</keyword>
<proteinExistence type="inferred from homology"/>
<name>HEM3_FRAP2</name>
<protein>
    <recommendedName>
        <fullName evidence="1">Porphobilinogen deaminase</fullName>
        <shortName evidence="1">PBG</shortName>
        <ecNumber evidence="1">2.5.1.61</ecNumber>
    </recommendedName>
    <alternativeName>
        <fullName evidence="1">Hydroxymethylbilane synthase</fullName>
        <shortName evidence="1">HMBS</shortName>
    </alternativeName>
    <alternativeName>
        <fullName evidence="1">Pre-uroporphyrinogen synthase</fullName>
    </alternativeName>
</protein>
<feature type="chain" id="PRO_1000078609" description="Porphobilinogen deaminase">
    <location>
        <begin position="1"/>
        <end position="300"/>
    </location>
</feature>
<feature type="modified residue" description="S-(dipyrrolylmethanemethyl)cysteine" evidence="1">
    <location>
        <position position="239"/>
    </location>
</feature>
<organism>
    <name type="scientific">Francisella philomiragia subsp. philomiragia (strain ATCC 25017 / CCUG 19701 / FSC 153 / O#319-036)</name>
    <dbReference type="NCBI Taxonomy" id="484022"/>
    <lineage>
        <taxon>Bacteria</taxon>
        <taxon>Pseudomonadati</taxon>
        <taxon>Pseudomonadota</taxon>
        <taxon>Gammaproteobacteria</taxon>
        <taxon>Thiotrichales</taxon>
        <taxon>Francisellaceae</taxon>
        <taxon>Francisella</taxon>
    </lineage>
</organism>
<evidence type="ECO:0000255" key="1">
    <source>
        <dbReference type="HAMAP-Rule" id="MF_00260"/>
    </source>
</evidence>
<dbReference type="EC" id="2.5.1.61" evidence="1"/>
<dbReference type="EMBL" id="CP000937">
    <property type="protein sequence ID" value="ABZ86912.1"/>
    <property type="molecule type" value="Genomic_DNA"/>
</dbReference>
<dbReference type="SMR" id="B0TW04"/>
<dbReference type="KEGG" id="fph:Fphi_0691"/>
<dbReference type="eggNOG" id="COG0181">
    <property type="taxonomic scope" value="Bacteria"/>
</dbReference>
<dbReference type="HOGENOM" id="CLU_019704_0_2_6"/>
<dbReference type="UniPathway" id="UPA00251">
    <property type="reaction ID" value="UER00319"/>
</dbReference>
<dbReference type="GO" id="GO:0005737">
    <property type="term" value="C:cytoplasm"/>
    <property type="evidence" value="ECO:0007669"/>
    <property type="project" value="TreeGrafter"/>
</dbReference>
<dbReference type="GO" id="GO:0004418">
    <property type="term" value="F:hydroxymethylbilane synthase activity"/>
    <property type="evidence" value="ECO:0007669"/>
    <property type="project" value="UniProtKB-UniRule"/>
</dbReference>
<dbReference type="GO" id="GO:0006782">
    <property type="term" value="P:protoporphyrinogen IX biosynthetic process"/>
    <property type="evidence" value="ECO:0007669"/>
    <property type="project" value="UniProtKB-UniRule"/>
</dbReference>
<dbReference type="CDD" id="cd13646">
    <property type="entry name" value="PBP2_EcHMBS_like"/>
    <property type="match status" value="1"/>
</dbReference>
<dbReference type="FunFam" id="3.40.190.10:FF:000004">
    <property type="entry name" value="Porphobilinogen deaminase"/>
    <property type="match status" value="1"/>
</dbReference>
<dbReference type="FunFam" id="3.40.190.10:FF:000005">
    <property type="entry name" value="Porphobilinogen deaminase"/>
    <property type="match status" value="1"/>
</dbReference>
<dbReference type="Gene3D" id="3.40.190.10">
    <property type="entry name" value="Periplasmic binding protein-like II"/>
    <property type="match status" value="2"/>
</dbReference>
<dbReference type="Gene3D" id="3.30.160.40">
    <property type="entry name" value="Porphobilinogen deaminase, C-terminal domain"/>
    <property type="match status" value="1"/>
</dbReference>
<dbReference type="HAMAP" id="MF_00260">
    <property type="entry name" value="Porphobil_deam"/>
    <property type="match status" value="1"/>
</dbReference>
<dbReference type="InterPro" id="IPR000860">
    <property type="entry name" value="HemC"/>
</dbReference>
<dbReference type="InterPro" id="IPR022419">
    <property type="entry name" value="Porphobilin_deaminase_cofac_BS"/>
</dbReference>
<dbReference type="InterPro" id="IPR022417">
    <property type="entry name" value="Porphobilin_deaminase_N"/>
</dbReference>
<dbReference type="InterPro" id="IPR022418">
    <property type="entry name" value="Porphobilinogen_deaminase_C"/>
</dbReference>
<dbReference type="InterPro" id="IPR036803">
    <property type="entry name" value="Porphobilinogen_deaminase_C_sf"/>
</dbReference>
<dbReference type="NCBIfam" id="TIGR00212">
    <property type="entry name" value="hemC"/>
    <property type="match status" value="1"/>
</dbReference>
<dbReference type="PANTHER" id="PTHR11557">
    <property type="entry name" value="PORPHOBILINOGEN DEAMINASE"/>
    <property type="match status" value="1"/>
</dbReference>
<dbReference type="PANTHER" id="PTHR11557:SF0">
    <property type="entry name" value="PORPHOBILINOGEN DEAMINASE"/>
    <property type="match status" value="1"/>
</dbReference>
<dbReference type="Pfam" id="PF01379">
    <property type="entry name" value="Porphobil_deam"/>
    <property type="match status" value="1"/>
</dbReference>
<dbReference type="Pfam" id="PF03900">
    <property type="entry name" value="Porphobil_deamC"/>
    <property type="match status" value="1"/>
</dbReference>
<dbReference type="PIRSF" id="PIRSF001438">
    <property type="entry name" value="4pyrrol_synth_OHMeBilane_synth"/>
    <property type="match status" value="1"/>
</dbReference>
<dbReference type="PRINTS" id="PR00151">
    <property type="entry name" value="PORPHBDMNASE"/>
</dbReference>
<dbReference type="SUPFAM" id="SSF53850">
    <property type="entry name" value="Periplasmic binding protein-like II"/>
    <property type="match status" value="1"/>
</dbReference>
<dbReference type="SUPFAM" id="SSF54782">
    <property type="entry name" value="Porphobilinogen deaminase (hydroxymethylbilane synthase), C-terminal domain"/>
    <property type="match status" value="1"/>
</dbReference>
<dbReference type="PROSITE" id="PS00533">
    <property type="entry name" value="PORPHOBILINOGEN_DEAM"/>
    <property type="match status" value="1"/>
</dbReference>
<comment type="function">
    <text evidence="1">Tetrapolymerization of the monopyrrole PBG into the hydroxymethylbilane pre-uroporphyrinogen in several discrete steps.</text>
</comment>
<comment type="catalytic activity">
    <reaction evidence="1">
        <text>4 porphobilinogen + H2O = hydroxymethylbilane + 4 NH4(+)</text>
        <dbReference type="Rhea" id="RHEA:13185"/>
        <dbReference type="ChEBI" id="CHEBI:15377"/>
        <dbReference type="ChEBI" id="CHEBI:28938"/>
        <dbReference type="ChEBI" id="CHEBI:57845"/>
        <dbReference type="ChEBI" id="CHEBI:58126"/>
        <dbReference type="EC" id="2.5.1.61"/>
    </reaction>
</comment>
<comment type="cofactor">
    <cofactor evidence="1">
        <name>dipyrromethane</name>
        <dbReference type="ChEBI" id="CHEBI:60342"/>
    </cofactor>
    <text evidence="1">Binds 1 dipyrromethane group covalently.</text>
</comment>
<comment type="pathway">
    <text evidence="1">Porphyrin-containing compound metabolism; protoporphyrin-IX biosynthesis; coproporphyrinogen-III from 5-aminolevulinate: step 2/4.</text>
</comment>
<comment type="subunit">
    <text evidence="1">Monomer.</text>
</comment>
<comment type="miscellaneous">
    <text evidence="1">The porphobilinogen subunits are added to the dipyrromethane group.</text>
</comment>
<comment type="similarity">
    <text evidence="1">Belongs to the HMBS family.</text>
</comment>